<organism>
    <name type="scientific">Francisella tularensis subsp. novicida (strain U112)</name>
    <dbReference type="NCBI Taxonomy" id="401614"/>
    <lineage>
        <taxon>Bacteria</taxon>
        <taxon>Pseudomonadati</taxon>
        <taxon>Pseudomonadota</taxon>
        <taxon>Gammaproteobacteria</taxon>
        <taxon>Thiotrichales</taxon>
        <taxon>Francisellaceae</taxon>
        <taxon>Francisella</taxon>
    </lineage>
</organism>
<name>RLMKL_FRATN</name>
<comment type="function">
    <text evidence="1">Specifically methylates the guanine in position 2445 (m2G2445) and the guanine in position 2069 (m7G2069) of 23S rRNA.</text>
</comment>
<comment type="catalytic activity">
    <reaction evidence="1">
        <text>guanosine(2445) in 23S rRNA + S-adenosyl-L-methionine = N(2)-methylguanosine(2445) in 23S rRNA + S-adenosyl-L-homocysteine + H(+)</text>
        <dbReference type="Rhea" id="RHEA:42740"/>
        <dbReference type="Rhea" id="RHEA-COMP:10215"/>
        <dbReference type="Rhea" id="RHEA-COMP:10216"/>
        <dbReference type="ChEBI" id="CHEBI:15378"/>
        <dbReference type="ChEBI" id="CHEBI:57856"/>
        <dbReference type="ChEBI" id="CHEBI:59789"/>
        <dbReference type="ChEBI" id="CHEBI:74269"/>
        <dbReference type="ChEBI" id="CHEBI:74481"/>
        <dbReference type="EC" id="2.1.1.173"/>
    </reaction>
</comment>
<comment type="catalytic activity">
    <reaction evidence="1">
        <text>guanosine(2069) in 23S rRNA + S-adenosyl-L-methionine = N(2)-methylguanosine(2069) in 23S rRNA + S-adenosyl-L-homocysteine + H(+)</text>
        <dbReference type="Rhea" id="RHEA:43772"/>
        <dbReference type="Rhea" id="RHEA-COMP:10688"/>
        <dbReference type="Rhea" id="RHEA-COMP:10689"/>
        <dbReference type="ChEBI" id="CHEBI:15378"/>
        <dbReference type="ChEBI" id="CHEBI:57856"/>
        <dbReference type="ChEBI" id="CHEBI:59789"/>
        <dbReference type="ChEBI" id="CHEBI:74269"/>
        <dbReference type="ChEBI" id="CHEBI:74481"/>
        <dbReference type="EC" id="2.1.1.264"/>
    </reaction>
</comment>
<comment type="subcellular location">
    <subcellularLocation>
        <location evidence="1">Cytoplasm</location>
    </subcellularLocation>
</comment>
<comment type="similarity">
    <text evidence="1">Belongs to the methyltransferase superfamily. RlmKL family.</text>
</comment>
<reference key="1">
    <citation type="journal article" date="2007" name="Genome Biol.">
        <title>Comparison of Francisella tularensis genomes reveals evolutionary events associated with the emergence of human pathogenic strains.</title>
        <authorList>
            <person name="Rohmer L."/>
            <person name="Fong C."/>
            <person name="Abmayr S."/>
            <person name="Wasnick M."/>
            <person name="Larson Freeman T.J."/>
            <person name="Radey M."/>
            <person name="Guina T."/>
            <person name="Svensson K."/>
            <person name="Hayden H.S."/>
            <person name="Jacobs M."/>
            <person name="Gallagher L.A."/>
            <person name="Manoil C."/>
            <person name="Ernst R.K."/>
            <person name="Drees B."/>
            <person name="Buckley D."/>
            <person name="Haugen E."/>
            <person name="Bovee D."/>
            <person name="Zhou Y."/>
            <person name="Chang J."/>
            <person name="Levy R."/>
            <person name="Lim R."/>
            <person name="Gillett W."/>
            <person name="Guenthener D."/>
            <person name="Kang A."/>
            <person name="Shaffer S.A."/>
            <person name="Taylor G."/>
            <person name="Chen J."/>
            <person name="Gallis B."/>
            <person name="D'Argenio D.A."/>
            <person name="Forsman M."/>
            <person name="Olson M.V."/>
            <person name="Goodlett D.R."/>
            <person name="Kaul R."/>
            <person name="Miller S.I."/>
            <person name="Brittnacher M.J."/>
        </authorList>
    </citation>
    <scope>NUCLEOTIDE SEQUENCE [LARGE SCALE GENOMIC DNA]</scope>
    <source>
        <strain>U112</strain>
    </source>
</reference>
<sequence>MQKFTFFVSCAKGIELLLKDELERLGISSQEKLAGVEFEGSIKDAYKVCIYSYLASQVMLKVATDKVINQQDLYEFISSINWMDYFAVDKTFKIIISGKHYDFNNTMFVSQKTKDAIVDQFRNVTNQRPNIDTENPDNVIKLHLHKQFVNVFLCLNIDSLHKRSYRQFQGQAPLKESLAAAILIKAGWLEELKKHQPILIDPMCGSGTILIEAALMAKNIAPVLLNKEFKIFNSKFHNKELWDNLLEIAKNSQKVTNAIICGFDIDNNVLDKAQRNIYQAGVEDVVTVKRQDIRDLENEFESEGLIVTNPPYGERLYGDQLDELLDIFNGFGDRLSQDFYGWKVAVLTSFADSIKEMQLRTTKRNKFYNGAIETILYQFEINEHAKFKHETQLEKNIRIAEASVQKSDEHIDFANKLKKNLKSLKPWLKQTGLECYRLYDADIPTFAVAVDVYGEHIFLQEYRADATIDQNIAKQRFYQAIYQIHKTLDIKYENIHTRVRQRQKGKEQYQKENDKNKFHIINEFDAKFYVNFDDYLDTGIFLDHRKIRQLVAKAAKNKTLLNLFSYTCTASVHAALKGAKTTSVDMSNTYLEWGKNNFELNKLDIKKHSFIQADCISWLKTNKDKFDVIFLDPPTFSNSKRMDDILDIQRDHELLINLAMDSLKKDGILYFSNNYRRFKMSPQILEKFNCENIDKICLSRDFLSNKNIHNCWEIKYKK</sequence>
<feature type="chain" id="PRO_0000366755" description="Ribosomal RNA large subunit methyltransferase K/L">
    <location>
        <begin position="1"/>
        <end position="718"/>
    </location>
</feature>
<feature type="domain" description="THUMP" evidence="1">
    <location>
        <begin position="44"/>
        <end position="155"/>
    </location>
</feature>
<dbReference type="EC" id="2.1.1.173" evidence="1"/>
<dbReference type="EC" id="2.1.1.264" evidence="1"/>
<dbReference type="EMBL" id="CP000439">
    <property type="protein sequence ID" value="ABK89686.1"/>
    <property type="molecule type" value="Genomic_DNA"/>
</dbReference>
<dbReference type="SMR" id="A0Q621"/>
<dbReference type="KEGG" id="ftn:FTN_0798"/>
<dbReference type="KEGG" id="ftx:AW25_1222"/>
<dbReference type="BioCyc" id="FTUL401614:G1G75-833-MONOMER"/>
<dbReference type="Proteomes" id="UP000000762">
    <property type="component" value="Chromosome"/>
</dbReference>
<dbReference type="GO" id="GO:0005737">
    <property type="term" value="C:cytoplasm"/>
    <property type="evidence" value="ECO:0007669"/>
    <property type="project" value="UniProtKB-SubCell"/>
</dbReference>
<dbReference type="GO" id="GO:0052915">
    <property type="term" value="F:23S rRNA (guanine(2445)-N(2))-methyltransferase activity"/>
    <property type="evidence" value="ECO:0007669"/>
    <property type="project" value="UniProtKB-UniRule"/>
</dbReference>
<dbReference type="GO" id="GO:0003723">
    <property type="term" value="F:RNA binding"/>
    <property type="evidence" value="ECO:0007669"/>
    <property type="project" value="UniProtKB-KW"/>
</dbReference>
<dbReference type="GO" id="GO:0070043">
    <property type="term" value="F:rRNA (guanine-N7-)-methyltransferase activity"/>
    <property type="evidence" value="ECO:0007669"/>
    <property type="project" value="UniProtKB-UniRule"/>
</dbReference>
<dbReference type="CDD" id="cd02440">
    <property type="entry name" value="AdoMet_MTases"/>
    <property type="match status" value="1"/>
</dbReference>
<dbReference type="CDD" id="cd11715">
    <property type="entry name" value="THUMP_AdoMetMT"/>
    <property type="match status" value="1"/>
</dbReference>
<dbReference type="Gene3D" id="3.30.2130.30">
    <property type="match status" value="1"/>
</dbReference>
<dbReference type="Gene3D" id="3.30.750.80">
    <property type="entry name" value="RNA methyltransferase domain (HRMD) like"/>
    <property type="match status" value="1"/>
</dbReference>
<dbReference type="Gene3D" id="3.40.50.150">
    <property type="entry name" value="Vaccinia Virus protein VP39"/>
    <property type="match status" value="2"/>
</dbReference>
<dbReference type="HAMAP" id="MF_01858">
    <property type="entry name" value="23SrRNA_methyltr_KL"/>
    <property type="match status" value="1"/>
</dbReference>
<dbReference type="InterPro" id="IPR017244">
    <property type="entry name" value="23SrRNA_methyltr_KL"/>
</dbReference>
<dbReference type="InterPro" id="IPR002052">
    <property type="entry name" value="DNA_methylase_N6_adenine_CS"/>
</dbReference>
<dbReference type="InterPro" id="IPR000241">
    <property type="entry name" value="RlmKL-like_Mtase"/>
</dbReference>
<dbReference type="InterPro" id="IPR053943">
    <property type="entry name" value="RlmKL-like_Mtase_CS"/>
</dbReference>
<dbReference type="InterPro" id="IPR054170">
    <property type="entry name" value="RlmL_1st"/>
</dbReference>
<dbReference type="InterPro" id="IPR019614">
    <property type="entry name" value="SAM-dep_methyl-trfase"/>
</dbReference>
<dbReference type="InterPro" id="IPR029063">
    <property type="entry name" value="SAM-dependent_MTases_sf"/>
</dbReference>
<dbReference type="InterPro" id="IPR004114">
    <property type="entry name" value="THUMP_dom"/>
</dbReference>
<dbReference type="NCBIfam" id="NF008748">
    <property type="entry name" value="PRK11783.1"/>
    <property type="match status" value="1"/>
</dbReference>
<dbReference type="PANTHER" id="PTHR47313">
    <property type="entry name" value="RIBOSOMAL RNA LARGE SUBUNIT METHYLTRANSFERASE K/L"/>
    <property type="match status" value="1"/>
</dbReference>
<dbReference type="PANTHER" id="PTHR47313:SF1">
    <property type="entry name" value="RIBOSOMAL RNA LARGE SUBUNIT METHYLTRANSFERASE K_L"/>
    <property type="match status" value="1"/>
</dbReference>
<dbReference type="Pfam" id="PF10672">
    <property type="entry name" value="Methyltrans_SAM"/>
    <property type="match status" value="1"/>
</dbReference>
<dbReference type="Pfam" id="PF22020">
    <property type="entry name" value="RlmL_1st"/>
    <property type="match status" value="1"/>
</dbReference>
<dbReference type="Pfam" id="PF02926">
    <property type="entry name" value="THUMP"/>
    <property type="match status" value="1"/>
</dbReference>
<dbReference type="Pfam" id="PF01170">
    <property type="entry name" value="UPF0020"/>
    <property type="match status" value="1"/>
</dbReference>
<dbReference type="PIRSF" id="PIRSF037618">
    <property type="entry name" value="RNA_Mtase_bacteria_prd"/>
    <property type="match status" value="1"/>
</dbReference>
<dbReference type="SMART" id="SM00981">
    <property type="entry name" value="THUMP"/>
    <property type="match status" value="1"/>
</dbReference>
<dbReference type="SUPFAM" id="SSF53335">
    <property type="entry name" value="S-adenosyl-L-methionine-dependent methyltransferases"/>
    <property type="match status" value="2"/>
</dbReference>
<dbReference type="PROSITE" id="PS51165">
    <property type="entry name" value="THUMP"/>
    <property type="match status" value="1"/>
</dbReference>
<dbReference type="PROSITE" id="PS01261">
    <property type="entry name" value="UPF0020"/>
    <property type="match status" value="1"/>
</dbReference>
<protein>
    <recommendedName>
        <fullName evidence="1">Ribosomal RNA large subunit methyltransferase K/L</fullName>
    </recommendedName>
    <domain>
        <recommendedName>
            <fullName evidence="1">23S rRNA m2G2445 methyltransferase</fullName>
            <ecNumber evidence="1">2.1.1.173</ecNumber>
        </recommendedName>
        <alternativeName>
            <fullName evidence="1">rRNA (guanine-N(2)-)-methyltransferase RlmL</fullName>
        </alternativeName>
    </domain>
    <domain>
        <recommendedName>
            <fullName evidence="1">23S rRNA m7G2069 methyltransferase</fullName>
            <ecNumber evidence="1">2.1.1.264</ecNumber>
        </recommendedName>
        <alternativeName>
            <fullName evidence="1">rRNA (guanine-N(7)-)-methyltransferase RlmK</fullName>
        </alternativeName>
    </domain>
</protein>
<gene>
    <name evidence="1" type="primary">rlmL</name>
    <name type="ordered locus">FTN_0798</name>
</gene>
<accession>A0Q621</accession>
<keyword id="KW-0963">Cytoplasm</keyword>
<keyword id="KW-0489">Methyltransferase</keyword>
<keyword id="KW-0694">RNA-binding</keyword>
<keyword id="KW-0698">rRNA processing</keyword>
<keyword id="KW-0949">S-adenosyl-L-methionine</keyword>
<keyword id="KW-0808">Transferase</keyword>
<evidence type="ECO:0000255" key="1">
    <source>
        <dbReference type="HAMAP-Rule" id="MF_01858"/>
    </source>
</evidence>
<proteinExistence type="inferred from homology"/>